<evidence type="ECO:0000255" key="1">
    <source>
        <dbReference type="HAMAP-Rule" id="MF_01636"/>
    </source>
</evidence>
<evidence type="ECO:0000305" key="2"/>
<gene>
    <name evidence="1" type="primary">ubiD</name>
    <name type="ordered locus">Rmet_2698</name>
</gene>
<proteinExistence type="inferred from homology"/>
<comment type="function">
    <text evidence="1">Catalyzes the decarboxylation of 3-octaprenyl-4-hydroxy benzoate to 2-octaprenylphenol, an intermediate step in ubiquinone biosynthesis.</text>
</comment>
<comment type="catalytic activity">
    <reaction evidence="1">
        <text>a 4-hydroxy-3-(all-trans-polyprenyl)benzoate + H(+) = a 2-(all-trans-polyprenyl)phenol + CO2</text>
        <dbReference type="Rhea" id="RHEA:41680"/>
        <dbReference type="Rhea" id="RHEA-COMP:9514"/>
        <dbReference type="Rhea" id="RHEA-COMP:9516"/>
        <dbReference type="ChEBI" id="CHEBI:1269"/>
        <dbReference type="ChEBI" id="CHEBI:15378"/>
        <dbReference type="ChEBI" id="CHEBI:16526"/>
        <dbReference type="ChEBI" id="CHEBI:78396"/>
        <dbReference type="EC" id="4.1.1.98"/>
    </reaction>
</comment>
<comment type="cofactor">
    <cofactor evidence="1">
        <name>prenylated FMN</name>
        <dbReference type="ChEBI" id="CHEBI:87746"/>
    </cofactor>
    <text evidence="1">Binds 1 prenylated FMN per subunit.</text>
</comment>
<comment type="cofactor">
    <cofactor evidence="1">
        <name>Mn(2+)</name>
        <dbReference type="ChEBI" id="CHEBI:29035"/>
    </cofactor>
</comment>
<comment type="pathway">
    <text evidence="1">Cofactor biosynthesis; ubiquinone biosynthesis.</text>
</comment>
<comment type="subunit">
    <text evidence="1">Homohexamer.</text>
</comment>
<comment type="subcellular location">
    <subcellularLocation>
        <location evidence="1">Cell membrane</location>
        <topology evidence="1">Peripheral membrane protein</topology>
    </subcellularLocation>
</comment>
<comment type="similarity">
    <text evidence="1">Belongs to the UbiD family.</text>
</comment>
<comment type="sequence caution" evidence="2">
    <conflict type="erroneous initiation">
        <sequence resource="EMBL-CDS" id="ABF09571"/>
    </conflict>
</comment>
<feature type="chain" id="PRO_0000267687" description="3-octaprenyl-4-hydroxybenzoate carboxy-lyase">
    <location>
        <begin position="1"/>
        <end position="507"/>
    </location>
</feature>
<feature type="active site" description="Proton donor" evidence="1">
    <location>
        <position position="302"/>
    </location>
</feature>
<feature type="binding site" evidence="1">
    <location>
        <position position="177"/>
    </location>
    <ligand>
        <name>Mn(2+)</name>
        <dbReference type="ChEBI" id="CHEBI:29035"/>
    </ligand>
</feature>
<feature type="binding site" evidence="1">
    <location>
        <begin position="180"/>
        <end position="182"/>
    </location>
    <ligand>
        <name>prenylated FMN</name>
        <dbReference type="ChEBI" id="CHEBI:87746"/>
    </ligand>
</feature>
<feature type="binding site" evidence="1">
    <location>
        <begin position="194"/>
        <end position="196"/>
    </location>
    <ligand>
        <name>prenylated FMN</name>
        <dbReference type="ChEBI" id="CHEBI:87746"/>
    </ligand>
</feature>
<feature type="binding site" evidence="1">
    <location>
        <begin position="199"/>
        <end position="200"/>
    </location>
    <ligand>
        <name>prenylated FMN</name>
        <dbReference type="ChEBI" id="CHEBI:87746"/>
    </ligand>
</feature>
<feature type="binding site" evidence="1">
    <location>
        <position position="243"/>
    </location>
    <ligand>
        <name>Mn(2+)</name>
        <dbReference type="ChEBI" id="CHEBI:29035"/>
    </ligand>
</feature>
<name>UBID_CUPMC</name>
<accession>Q1LJV5</accession>
<protein>
    <recommendedName>
        <fullName evidence="1">3-octaprenyl-4-hydroxybenzoate carboxy-lyase</fullName>
        <ecNumber evidence="1">4.1.1.98</ecNumber>
    </recommendedName>
    <alternativeName>
        <fullName evidence="1">Polyprenyl p-hydroxybenzoate decarboxylase</fullName>
    </alternativeName>
</protein>
<dbReference type="EC" id="4.1.1.98" evidence="1"/>
<dbReference type="EMBL" id="CP000352">
    <property type="protein sequence ID" value="ABF09571.1"/>
    <property type="status" value="ALT_INIT"/>
    <property type="molecule type" value="Genomic_DNA"/>
</dbReference>
<dbReference type="RefSeq" id="WP_029309737.1">
    <property type="nucleotide sequence ID" value="NC_007973.1"/>
</dbReference>
<dbReference type="SMR" id="Q1LJV5"/>
<dbReference type="STRING" id="266264.Rmet_2698"/>
<dbReference type="KEGG" id="rme:Rmet_2698"/>
<dbReference type="eggNOG" id="COG0043">
    <property type="taxonomic scope" value="Bacteria"/>
</dbReference>
<dbReference type="HOGENOM" id="CLU_023348_4_1_4"/>
<dbReference type="UniPathway" id="UPA00232"/>
<dbReference type="Proteomes" id="UP000002429">
    <property type="component" value="Chromosome"/>
</dbReference>
<dbReference type="GO" id="GO:0005829">
    <property type="term" value="C:cytosol"/>
    <property type="evidence" value="ECO:0007669"/>
    <property type="project" value="TreeGrafter"/>
</dbReference>
<dbReference type="GO" id="GO:0005886">
    <property type="term" value="C:plasma membrane"/>
    <property type="evidence" value="ECO:0007669"/>
    <property type="project" value="UniProtKB-SubCell"/>
</dbReference>
<dbReference type="GO" id="GO:0008694">
    <property type="term" value="F:3-octaprenyl-4-hydroxybenzoate carboxy-lyase activity"/>
    <property type="evidence" value="ECO:0007669"/>
    <property type="project" value="UniProtKB-UniRule"/>
</dbReference>
<dbReference type="GO" id="GO:0046872">
    <property type="term" value="F:metal ion binding"/>
    <property type="evidence" value="ECO:0007669"/>
    <property type="project" value="UniProtKB-KW"/>
</dbReference>
<dbReference type="GO" id="GO:0006744">
    <property type="term" value="P:ubiquinone biosynthetic process"/>
    <property type="evidence" value="ECO:0007669"/>
    <property type="project" value="UniProtKB-UniRule"/>
</dbReference>
<dbReference type="FunFam" id="3.40.1670.10:FF:000001">
    <property type="entry name" value="3-octaprenyl-4-hydroxybenzoate carboxy-lyase"/>
    <property type="match status" value="1"/>
</dbReference>
<dbReference type="Gene3D" id="1.20.5.570">
    <property type="entry name" value="Single helix bin"/>
    <property type="match status" value="1"/>
</dbReference>
<dbReference type="Gene3D" id="3.40.1670.10">
    <property type="entry name" value="UbiD C-terminal domain-like"/>
    <property type="match status" value="1"/>
</dbReference>
<dbReference type="HAMAP" id="MF_01636">
    <property type="entry name" value="UbiD"/>
    <property type="match status" value="1"/>
</dbReference>
<dbReference type="InterPro" id="IPR002830">
    <property type="entry name" value="UbiD"/>
</dbReference>
<dbReference type="InterPro" id="IPR049381">
    <property type="entry name" value="UbiD-like_C"/>
</dbReference>
<dbReference type="InterPro" id="IPR049383">
    <property type="entry name" value="UbiD-like_N"/>
</dbReference>
<dbReference type="InterPro" id="IPR023677">
    <property type="entry name" value="UbiD_bacteria"/>
</dbReference>
<dbReference type="InterPro" id="IPR048304">
    <property type="entry name" value="UbiD_Rift_dom"/>
</dbReference>
<dbReference type="NCBIfam" id="NF008175">
    <property type="entry name" value="PRK10922.1"/>
    <property type="match status" value="1"/>
</dbReference>
<dbReference type="NCBIfam" id="TIGR00148">
    <property type="entry name" value="UbiD family decarboxylase"/>
    <property type="match status" value="1"/>
</dbReference>
<dbReference type="PANTHER" id="PTHR30108">
    <property type="entry name" value="3-OCTAPRENYL-4-HYDROXYBENZOATE CARBOXY-LYASE-RELATED"/>
    <property type="match status" value="1"/>
</dbReference>
<dbReference type="PANTHER" id="PTHR30108:SF17">
    <property type="entry name" value="FERULIC ACID DECARBOXYLASE 1"/>
    <property type="match status" value="1"/>
</dbReference>
<dbReference type="Pfam" id="PF01977">
    <property type="entry name" value="UbiD"/>
    <property type="match status" value="1"/>
</dbReference>
<dbReference type="Pfam" id="PF20696">
    <property type="entry name" value="UbiD_C"/>
    <property type="match status" value="1"/>
</dbReference>
<dbReference type="Pfam" id="PF20695">
    <property type="entry name" value="UbiD_N"/>
    <property type="match status" value="1"/>
</dbReference>
<dbReference type="SUPFAM" id="SSF50475">
    <property type="entry name" value="FMN-binding split barrel"/>
    <property type="match status" value="1"/>
</dbReference>
<dbReference type="SUPFAM" id="SSF143968">
    <property type="entry name" value="UbiD C-terminal domain-like"/>
    <property type="match status" value="1"/>
</dbReference>
<keyword id="KW-1003">Cell membrane</keyword>
<keyword id="KW-0210">Decarboxylase</keyword>
<keyword id="KW-0285">Flavoprotein</keyword>
<keyword id="KW-0288">FMN</keyword>
<keyword id="KW-0456">Lyase</keyword>
<keyword id="KW-0464">Manganese</keyword>
<keyword id="KW-0472">Membrane</keyword>
<keyword id="KW-0479">Metal-binding</keyword>
<keyword id="KW-1185">Reference proteome</keyword>
<keyword id="KW-0831">Ubiquinone biosynthesis</keyword>
<sequence>MQYKDLRDFMSQLEQRGELKRVAAPVSPNLEMTEICDRLLRANGPAVLFEQPRRDNGDIYKVPVLANLFGTTQRVAQGMGASSLEDLRDIGRVLSVLKEPEPPRGLREAGKLFTLAKSVWDMAPKRVSSPACQEIVWEGNDVDLARLPIQTCWPGDAAPLITWGLVVTKGPHKKRQNLGIYRQQVISRNQVIMRWLAHRGGALDFREHALANPGKPFPIAVALGADPATILGAVTPVPDTLSEYQFAGLLRGSRTALASCITPTLSELSVPASAEIILEGHIQPDPNHPSGYQHALEGPYGDHTGYYNEQDWFPVFTIDRITMRRDPIYHSTYTGKPPDEPAVLGVALNEVFVPLLQKQFPEITDFYLPPEGCSYRMALVRMKKQYAGHAKRVMFGVWSFLRQFMYTKFIVVVDDDIDVRDWKEVIWAITTRVDPTRDTVMVDNTPIDYLDFASPVSGLGSKMGIDATDKWPGETTREWGTPITMAPEIKARVDQMWGSLFEEGPGK</sequence>
<reference key="1">
    <citation type="journal article" date="2010" name="PLoS ONE">
        <title>The complete genome sequence of Cupriavidus metallidurans strain CH34, a master survivalist in harsh and anthropogenic environments.</title>
        <authorList>
            <person name="Janssen P.J."/>
            <person name="Van Houdt R."/>
            <person name="Moors H."/>
            <person name="Monsieurs P."/>
            <person name="Morin N."/>
            <person name="Michaux A."/>
            <person name="Benotmane M.A."/>
            <person name="Leys N."/>
            <person name="Vallaeys T."/>
            <person name="Lapidus A."/>
            <person name="Monchy S."/>
            <person name="Medigue C."/>
            <person name="Taghavi S."/>
            <person name="McCorkle S."/>
            <person name="Dunn J."/>
            <person name="van der Lelie D."/>
            <person name="Mergeay M."/>
        </authorList>
    </citation>
    <scope>NUCLEOTIDE SEQUENCE [LARGE SCALE GENOMIC DNA]</scope>
    <source>
        <strain>ATCC 43123 / DSM 2839 / NBRC 102507 / CH34</strain>
    </source>
</reference>
<organism>
    <name type="scientific">Cupriavidus metallidurans (strain ATCC 43123 / DSM 2839 / NBRC 102507 / CH34)</name>
    <name type="common">Ralstonia metallidurans</name>
    <dbReference type="NCBI Taxonomy" id="266264"/>
    <lineage>
        <taxon>Bacteria</taxon>
        <taxon>Pseudomonadati</taxon>
        <taxon>Pseudomonadota</taxon>
        <taxon>Betaproteobacteria</taxon>
        <taxon>Burkholderiales</taxon>
        <taxon>Burkholderiaceae</taxon>
        <taxon>Cupriavidus</taxon>
    </lineage>
</organism>